<proteinExistence type="evidence at protein level"/>
<comment type="function">
    <text>Involved in oxygen transport from the lung to the various peripheral tissues.</text>
</comment>
<comment type="subunit">
    <text>Heterotetramer of two alpha chains and two beta chains.</text>
</comment>
<comment type="tissue specificity">
    <text>Red blood cells.</text>
</comment>
<comment type="similarity">
    <text evidence="3">Belongs to the globin family.</text>
</comment>
<dbReference type="PIR" id="S00541">
    <property type="entry name" value="HBBTV"/>
</dbReference>
<dbReference type="SMR" id="P11752"/>
<dbReference type="OrthoDB" id="9886081at2759"/>
<dbReference type="GO" id="GO:0072562">
    <property type="term" value="C:blood microparticle"/>
    <property type="evidence" value="ECO:0007669"/>
    <property type="project" value="TreeGrafter"/>
</dbReference>
<dbReference type="GO" id="GO:0031838">
    <property type="term" value="C:haptoglobin-hemoglobin complex"/>
    <property type="evidence" value="ECO:0007669"/>
    <property type="project" value="TreeGrafter"/>
</dbReference>
<dbReference type="GO" id="GO:0005833">
    <property type="term" value="C:hemoglobin complex"/>
    <property type="evidence" value="ECO:0007669"/>
    <property type="project" value="InterPro"/>
</dbReference>
<dbReference type="GO" id="GO:0031720">
    <property type="term" value="F:haptoglobin binding"/>
    <property type="evidence" value="ECO:0007669"/>
    <property type="project" value="TreeGrafter"/>
</dbReference>
<dbReference type="GO" id="GO:0020037">
    <property type="term" value="F:heme binding"/>
    <property type="evidence" value="ECO:0007669"/>
    <property type="project" value="InterPro"/>
</dbReference>
<dbReference type="GO" id="GO:0031721">
    <property type="term" value="F:hemoglobin alpha binding"/>
    <property type="evidence" value="ECO:0007669"/>
    <property type="project" value="TreeGrafter"/>
</dbReference>
<dbReference type="GO" id="GO:0046872">
    <property type="term" value="F:metal ion binding"/>
    <property type="evidence" value="ECO:0007669"/>
    <property type="project" value="UniProtKB-KW"/>
</dbReference>
<dbReference type="GO" id="GO:0043177">
    <property type="term" value="F:organic acid binding"/>
    <property type="evidence" value="ECO:0007669"/>
    <property type="project" value="TreeGrafter"/>
</dbReference>
<dbReference type="GO" id="GO:0019825">
    <property type="term" value="F:oxygen binding"/>
    <property type="evidence" value="ECO:0007669"/>
    <property type="project" value="InterPro"/>
</dbReference>
<dbReference type="GO" id="GO:0005344">
    <property type="term" value="F:oxygen carrier activity"/>
    <property type="evidence" value="ECO:0007669"/>
    <property type="project" value="UniProtKB-KW"/>
</dbReference>
<dbReference type="GO" id="GO:0004601">
    <property type="term" value="F:peroxidase activity"/>
    <property type="evidence" value="ECO:0007669"/>
    <property type="project" value="TreeGrafter"/>
</dbReference>
<dbReference type="GO" id="GO:0042744">
    <property type="term" value="P:hydrogen peroxide catabolic process"/>
    <property type="evidence" value="ECO:0007669"/>
    <property type="project" value="TreeGrafter"/>
</dbReference>
<dbReference type="CDD" id="cd08925">
    <property type="entry name" value="Hb-beta-like"/>
    <property type="match status" value="1"/>
</dbReference>
<dbReference type="FunFam" id="1.10.490.10:FF:000001">
    <property type="entry name" value="Hemoglobin subunit beta"/>
    <property type="match status" value="1"/>
</dbReference>
<dbReference type="Gene3D" id="1.10.490.10">
    <property type="entry name" value="Globins"/>
    <property type="match status" value="1"/>
</dbReference>
<dbReference type="InterPro" id="IPR000971">
    <property type="entry name" value="Globin"/>
</dbReference>
<dbReference type="InterPro" id="IPR009050">
    <property type="entry name" value="Globin-like_sf"/>
</dbReference>
<dbReference type="InterPro" id="IPR012292">
    <property type="entry name" value="Globin/Proto"/>
</dbReference>
<dbReference type="InterPro" id="IPR002337">
    <property type="entry name" value="Hemoglobin_b"/>
</dbReference>
<dbReference type="InterPro" id="IPR050056">
    <property type="entry name" value="Hemoglobin_oxygen_transport"/>
</dbReference>
<dbReference type="PANTHER" id="PTHR11442">
    <property type="entry name" value="HEMOGLOBIN FAMILY MEMBER"/>
    <property type="match status" value="1"/>
</dbReference>
<dbReference type="PANTHER" id="PTHR11442:SF42">
    <property type="entry name" value="HEMOGLOBIN SUBUNIT BETA"/>
    <property type="match status" value="1"/>
</dbReference>
<dbReference type="Pfam" id="PF00042">
    <property type="entry name" value="Globin"/>
    <property type="match status" value="1"/>
</dbReference>
<dbReference type="PRINTS" id="PR00814">
    <property type="entry name" value="BETAHAEM"/>
</dbReference>
<dbReference type="SUPFAM" id="SSF46458">
    <property type="entry name" value="Globin-like"/>
    <property type="match status" value="1"/>
</dbReference>
<dbReference type="PROSITE" id="PS01033">
    <property type="entry name" value="GLOBIN"/>
    <property type="match status" value="1"/>
</dbReference>
<organism>
    <name type="scientific">Lyroderma lyra</name>
    <name type="common">Greater Asian false-vampire bat</name>
    <name type="synonym">Megaderma lyra</name>
    <dbReference type="NCBI Taxonomy" id="3371112"/>
    <lineage>
        <taxon>Eukaryota</taxon>
        <taxon>Metazoa</taxon>
        <taxon>Chordata</taxon>
        <taxon>Craniata</taxon>
        <taxon>Vertebrata</taxon>
        <taxon>Euteleostomi</taxon>
        <taxon>Mammalia</taxon>
        <taxon>Eutheria</taxon>
        <taxon>Laurasiatheria</taxon>
        <taxon>Chiroptera</taxon>
        <taxon>Yinpterochiroptera</taxon>
        <taxon>Rhinolophoidea</taxon>
        <taxon>Megadermatidae</taxon>
        <taxon>Lyroderma</taxon>
    </lineage>
</organism>
<keyword id="KW-0007">Acetylation</keyword>
<keyword id="KW-0903">Direct protein sequencing</keyword>
<keyword id="KW-0349">Heme</keyword>
<keyword id="KW-0408">Iron</keyword>
<keyword id="KW-0479">Metal-binding</keyword>
<keyword id="KW-0561">Oxygen transport</keyword>
<keyword id="KW-0597">Phosphoprotein</keyword>
<keyword id="KW-0702">S-nitrosylation</keyword>
<keyword id="KW-0813">Transport</keyword>
<protein>
    <recommendedName>
        <fullName>Hemoglobin subunit beta</fullName>
    </recommendedName>
    <alternativeName>
        <fullName>Beta-globin</fullName>
    </alternativeName>
    <alternativeName>
        <fullName>Hemoglobin beta chain</fullName>
    </alternativeName>
</protein>
<accession>P11752</accession>
<reference key="1">
    <citation type="journal article" date="1988" name="Biol. Chem. Hoppe-Seyler">
        <title>The primary structure of the hemoglobin of the Indian false vampire (Megaderma lyra, Microchiroptera).</title>
        <authorList>
            <person name="Sgouros J.G."/>
            <person name="Kleinschmidt T."/>
            <person name="Braunitzer G."/>
        </authorList>
    </citation>
    <scope>PROTEIN SEQUENCE</scope>
</reference>
<name>HBB_LYRLY</name>
<feature type="chain" id="PRO_0000053011" description="Hemoglobin subunit beta">
    <location>
        <begin position="1"/>
        <end position="146"/>
    </location>
</feature>
<feature type="domain" description="Globin" evidence="3">
    <location>
        <begin position="2"/>
        <end position="146"/>
    </location>
</feature>
<feature type="binding site" description="distal binding residue">
    <location>
        <position position="63"/>
    </location>
    <ligand>
        <name>heme b</name>
        <dbReference type="ChEBI" id="CHEBI:60344"/>
    </ligand>
    <ligandPart>
        <name>Fe</name>
        <dbReference type="ChEBI" id="CHEBI:18248"/>
    </ligandPart>
</feature>
<feature type="binding site" description="proximal binding residue">
    <location>
        <position position="92"/>
    </location>
    <ligand>
        <name>heme b</name>
        <dbReference type="ChEBI" id="CHEBI:60344"/>
    </ligand>
    <ligandPart>
        <name>Fe</name>
        <dbReference type="ChEBI" id="CHEBI:18248"/>
    </ligandPart>
</feature>
<feature type="modified residue" description="N-acetylvaline" evidence="1">
    <location>
        <position position="1"/>
    </location>
</feature>
<feature type="modified residue" description="Phosphoserine" evidence="2">
    <location>
        <position position="44"/>
    </location>
</feature>
<feature type="modified residue" description="N6-acetyllysine" evidence="2">
    <location>
        <position position="59"/>
    </location>
</feature>
<feature type="modified residue" description="N6-acetyllysine" evidence="2">
    <location>
        <position position="82"/>
    </location>
</feature>
<feature type="modified residue" description="S-nitrosocysteine" evidence="2">
    <location>
        <position position="93"/>
    </location>
</feature>
<feature type="modified residue" description="N6-acetyllysine" evidence="2">
    <location>
        <position position="144"/>
    </location>
</feature>
<evidence type="ECO:0000250" key="1">
    <source>
        <dbReference type="UniProtKB" id="P02086"/>
    </source>
</evidence>
<evidence type="ECO:0000250" key="2">
    <source>
        <dbReference type="UniProtKB" id="P68871"/>
    </source>
</evidence>
<evidence type="ECO:0000255" key="3">
    <source>
        <dbReference type="PROSITE-ProRule" id="PRU00238"/>
    </source>
</evidence>
<sequence length="146" mass="16145">VHLTNEEKTAVIGLWGKVNVEEVGGEALGRLLVVYPWTQRFFESFGDLSSPSAIMGNPKVKAHGKKVLNSFSEGLKNLDNLKGTFAKLSELHCDKLHVDPENFRLLGYILLCVLARHFGKEFTPQVQAAYQKVVAGVATALAHKYH</sequence>
<gene>
    <name type="primary">HBB</name>
</gene>